<protein>
    <recommendedName>
        <fullName>Acetyl-CoA acetyltransferase, mitochondrial</fullName>
        <ecNumber evidence="2">2.3.1.9</ecNumber>
    </recommendedName>
    <alternativeName>
        <fullName>Acetoacetyl-CoA thiolase</fullName>
    </alternativeName>
</protein>
<proteinExistence type="evidence at protein level"/>
<organism>
    <name type="scientific">Mus musculus</name>
    <name type="common">Mouse</name>
    <dbReference type="NCBI Taxonomy" id="10090"/>
    <lineage>
        <taxon>Eukaryota</taxon>
        <taxon>Metazoa</taxon>
        <taxon>Chordata</taxon>
        <taxon>Craniata</taxon>
        <taxon>Vertebrata</taxon>
        <taxon>Euteleostomi</taxon>
        <taxon>Mammalia</taxon>
        <taxon>Eutheria</taxon>
        <taxon>Euarchontoglires</taxon>
        <taxon>Glires</taxon>
        <taxon>Rodentia</taxon>
        <taxon>Myomorpha</taxon>
        <taxon>Muroidea</taxon>
        <taxon>Muridae</taxon>
        <taxon>Murinae</taxon>
        <taxon>Mus</taxon>
        <taxon>Mus</taxon>
    </lineage>
</organism>
<dbReference type="EC" id="2.3.1.9" evidence="2"/>
<dbReference type="EMBL" id="AJ510150">
    <property type="protein sequence ID" value="CAD52869.1"/>
    <property type="molecule type" value="mRNA"/>
</dbReference>
<dbReference type="EMBL" id="AK032097">
    <property type="protein sequence ID" value="BAC27697.1"/>
    <property type="molecule type" value="mRNA"/>
</dbReference>
<dbReference type="EMBL" id="AK081715">
    <property type="protein sequence ID" value="BAC38304.1"/>
    <property type="molecule type" value="mRNA"/>
</dbReference>
<dbReference type="EMBL" id="AK169771">
    <property type="protein sequence ID" value="BAE41356.1"/>
    <property type="molecule type" value="mRNA"/>
</dbReference>
<dbReference type="EMBL" id="BC024763">
    <property type="protein sequence ID" value="AAH24763.1"/>
    <property type="molecule type" value="mRNA"/>
</dbReference>
<dbReference type="CCDS" id="CCDS23184.1"/>
<dbReference type="RefSeq" id="NP_659033.1">
    <property type="nucleotide sequence ID" value="NM_144784.3"/>
</dbReference>
<dbReference type="SMR" id="Q8QZT1"/>
<dbReference type="BioGRID" id="225601">
    <property type="interactions" value="26"/>
</dbReference>
<dbReference type="FunCoup" id="Q8QZT1">
    <property type="interactions" value="2631"/>
</dbReference>
<dbReference type="IntAct" id="Q8QZT1">
    <property type="interactions" value="5"/>
</dbReference>
<dbReference type="MINT" id="Q8QZT1"/>
<dbReference type="STRING" id="10090.ENSMUSP00000034547"/>
<dbReference type="GlyGen" id="Q8QZT1">
    <property type="glycosylation" value="1 site, 1 O-linked glycan (1 site)"/>
</dbReference>
<dbReference type="iPTMnet" id="Q8QZT1"/>
<dbReference type="MetOSite" id="Q8QZT1"/>
<dbReference type="PhosphoSitePlus" id="Q8QZT1"/>
<dbReference type="SwissPalm" id="Q8QZT1"/>
<dbReference type="REPRODUCTION-2DPAGE" id="Q8QZT1"/>
<dbReference type="CPTAC" id="non-CPTAC-3882"/>
<dbReference type="jPOST" id="Q8QZT1"/>
<dbReference type="PaxDb" id="10090-ENSMUSP00000034547"/>
<dbReference type="PeptideAtlas" id="Q8QZT1"/>
<dbReference type="ProteomicsDB" id="259382"/>
<dbReference type="Pumba" id="Q8QZT1"/>
<dbReference type="Antibodypedia" id="1354">
    <property type="antibodies" value="578 antibodies from 38 providers"/>
</dbReference>
<dbReference type="DNASU" id="110446"/>
<dbReference type="Ensembl" id="ENSMUST00000034547.6">
    <property type="protein sequence ID" value="ENSMUSP00000034547.6"/>
    <property type="gene ID" value="ENSMUSG00000032047.6"/>
</dbReference>
<dbReference type="GeneID" id="110446"/>
<dbReference type="KEGG" id="mmu:110446"/>
<dbReference type="UCSC" id="uc009pmg.1">
    <property type="organism name" value="mouse"/>
</dbReference>
<dbReference type="AGR" id="MGI:87870"/>
<dbReference type="CTD" id="38"/>
<dbReference type="MGI" id="MGI:87870">
    <property type="gene designation" value="Acat1"/>
</dbReference>
<dbReference type="VEuPathDB" id="HostDB:ENSMUSG00000032047"/>
<dbReference type="eggNOG" id="KOG1390">
    <property type="taxonomic scope" value="Eukaryota"/>
</dbReference>
<dbReference type="GeneTree" id="ENSGT01030000234626"/>
<dbReference type="HOGENOM" id="CLU_031026_0_1_1"/>
<dbReference type="InParanoid" id="Q8QZT1"/>
<dbReference type="OMA" id="SMGTFGE"/>
<dbReference type="OrthoDB" id="5404651at2759"/>
<dbReference type="PhylomeDB" id="Q8QZT1"/>
<dbReference type="TreeFam" id="TF300650"/>
<dbReference type="Reactome" id="R-MMU-70895">
    <property type="pathway name" value="Branched-chain amino acid catabolism"/>
</dbReference>
<dbReference type="Reactome" id="R-MMU-77108">
    <property type="pathway name" value="Utilization of Ketone Bodies"/>
</dbReference>
<dbReference type="Reactome" id="R-MMU-77111">
    <property type="pathway name" value="Synthesis of Ketone Bodies"/>
</dbReference>
<dbReference type="Reactome" id="R-MMU-9837999">
    <property type="pathway name" value="Mitochondrial protein degradation"/>
</dbReference>
<dbReference type="Reactome" id="R-MMU-9854311">
    <property type="pathway name" value="Maturation of TCA enzymes and regulation of TCA cycle"/>
</dbReference>
<dbReference type="UniPathway" id="UPA00659"/>
<dbReference type="BioGRID-ORCS" id="110446">
    <property type="hits" value="2 hits in 79 CRISPR screens"/>
</dbReference>
<dbReference type="ChiTaRS" id="Acat1">
    <property type="organism name" value="mouse"/>
</dbReference>
<dbReference type="PRO" id="PR:Q8QZT1"/>
<dbReference type="Proteomes" id="UP000000589">
    <property type="component" value="Chromosome 9"/>
</dbReference>
<dbReference type="RNAct" id="Q8QZT1">
    <property type="molecule type" value="protein"/>
</dbReference>
<dbReference type="Bgee" id="ENSMUSG00000032047">
    <property type="expression patterns" value="Expressed in paneth cell and 246 other cell types or tissues"/>
</dbReference>
<dbReference type="GO" id="GO:0005783">
    <property type="term" value="C:endoplasmic reticulum"/>
    <property type="evidence" value="ECO:0007669"/>
    <property type="project" value="Ensembl"/>
</dbReference>
<dbReference type="GO" id="GO:0005743">
    <property type="term" value="C:mitochondrial inner membrane"/>
    <property type="evidence" value="ECO:0007005"/>
    <property type="project" value="MGI"/>
</dbReference>
<dbReference type="GO" id="GO:0005759">
    <property type="term" value="C:mitochondrial matrix"/>
    <property type="evidence" value="ECO:0007669"/>
    <property type="project" value="Ensembl"/>
</dbReference>
<dbReference type="GO" id="GO:0005739">
    <property type="term" value="C:mitochondrion"/>
    <property type="evidence" value="ECO:0007005"/>
    <property type="project" value="MGI"/>
</dbReference>
<dbReference type="GO" id="GO:0003985">
    <property type="term" value="F:acetyl-CoA C-acetyltransferase activity"/>
    <property type="evidence" value="ECO:0000314"/>
    <property type="project" value="MGI"/>
</dbReference>
<dbReference type="GO" id="GO:0034736">
    <property type="term" value="F:cholesterol O-acyltransferase activity"/>
    <property type="evidence" value="ECO:0007669"/>
    <property type="project" value="Ensembl"/>
</dbReference>
<dbReference type="GO" id="GO:0120225">
    <property type="term" value="F:coenzyme A binding"/>
    <property type="evidence" value="ECO:0007669"/>
    <property type="project" value="Ensembl"/>
</dbReference>
<dbReference type="GO" id="GO:0019899">
    <property type="term" value="F:enzyme binding"/>
    <property type="evidence" value="ECO:0007669"/>
    <property type="project" value="Ensembl"/>
</dbReference>
<dbReference type="GO" id="GO:0042802">
    <property type="term" value="F:identical protein binding"/>
    <property type="evidence" value="ECO:0007669"/>
    <property type="project" value="Ensembl"/>
</dbReference>
<dbReference type="GO" id="GO:0030955">
    <property type="term" value="F:potassium ion binding"/>
    <property type="evidence" value="ECO:0007669"/>
    <property type="project" value="Ensembl"/>
</dbReference>
<dbReference type="GO" id="GO:0006085">
    <property type="term" value="P:acetyl-CoA biosynthetic process"/>
    <property type="evidence" value="ECO:0007669"/>
    <property type="project" value="Ensembl"/>
</dbReference>
<dbReference type="GO" id="GO:0046356">
    <property type="term" value="P:acetyl-CoA catabolic process"/>
    <property type="evidence" value="ECO:0007669"/>
    <property type="project" value="Ensembl"/>
</dbReference>
<dbReference type="GO" id="GO:0060612">
    <property type="term" value="P:adipose tissue development"/>
    <property type="evidence" value="ECO:0007669"/>
    <property type="project" value="Ensembl"/>
</dbReference>
<dbReference type="GO" id="GO:0015937">
    <property type="term" value="P:coenzyme A biosynthetic process"/>
    <property type="evidence" value="ECO:0007669"/>
    <property type="project" value="Ensembl"/>
</dbReference>
<dbReference type="GO" id="GO:0006635">
    <property type="term" value="P:fatty acid beta-oxidation"/>
    <property type="evidence" value="ECO:0007669"/>
    <property type="project" value="UniProtKB-UniPathway"/>
</dbReference>
<dbReference type="GO" id="GO:0006550">
    <property type="term" value="P:isoleucine catabolic process"/>
    <property type="evidence" value="ECO:0007669"/>
    <property type="project" value="Ensembl"/>
</dbReference>
<dbReference type="GO" id="GO:0046952">
    <property type="term" value="P:ketone body catabolic process"/>
    <property type="evidence" value="ECO:0007669"/>
    <property type="project" value="Ensembl"/>
</dbReference>
<dbReference type="GO" id="GO:0001889">
    <property type="term" value="P:liver development"/>
    <property type="evidence" value="ECO:0007669"/>
    <property type="project" value="Ensembl"/>
</dbReference>
<dbReference type="GO" id="GO:0072229">
    <property type="term" value="P:metanephric proximal convoluted tubule development"/>
    <property type="evidence" value="ECO:0007669"/>
    <property type="project" value="Ensembl"/>
</dbReference>
<dbReference type="GO" id="GO:1902860">
    <property type="term" value="P:propionyl-CoA biosynthetic process"/>
    <property type="evidence" value="ECO:0007669"/>
    <property type="project" value="Ensembl"/>
</dbReference>
<dbReference type="GO" id="GO:0009725">
    <property type="term" value="P:response to hormone"/>
    <property type="evidence" value="ECO:0007669"/>
    <property type="project" value="Ensembl"/>
</dbReference>
<dbReference type="GO" id="GO:0042594">
    <property type="term" value="P:response to starvation"/>
    <property type="evidence" value="ECO:0007669"/>
    <property type="project" value="Ensembl"/>
</dbReference>
<dbReference type="CDD" id="cd00751">
    <property type="entry name" value="thiolase"/>
    <property type="match status" value="1"/>
</dbReference>
<dbReference type="FunFam" id="3.40.47.10:FF:000007">
    <property type="entry name" value="acetyl-CoA acetyltransferase, mitochondrial"/>
    <property type="match status" value="1"/>
</dbReference>
<dbReference type="Gene3D" id="3.40.47.10">
    <property type="match status" value="1"/>
</dbReference>
<dbReference type="InterPro" id="IPR002155">
    <property type="entry name" value="Thiolase"/>
</dbReference>
<dbReference type="InterPro" id="IPR016039">
    <property type="entry name" value="Thiolase-like"/>
</dbReference>
<dbReference type="InterPro" id="IPR020615">
    <property type="entry name" value="Thiolase_acyl_enz_int_AS"/>
</dbReference>
<dbReference type="InterPro" id="IPR020610">
    <property type="entry name" value="Thiolase_AS"/>
</dbReference>
<dbReference type="InterPro" id="IPR020617">
    <property type="entry name" value="Thiolase_C"/>
</dbReference>
<dbReference type="InterPro" id="IPR020613">
    <property type="entry name" value="Thiolase_CS"/>
</dbReference>
<dbReference type="InterPro" id="IPR020616">
    <property type="entry name" value="Thiolase_N"/>
</dbReference>
<dbReference type="NCBIfam" id="TIGR01930">
    <property type="entry name" value="AcCoA-C-Actrans"/>
    <property type="match status" value="1"/>
</dbReference>
<dbReference type="PANTHER" id="PTHR18919:SF156">
    <property type="entry name" value="ACETYL-COA ACETYLTRANSFERASE, MITOCHONDRIAL"/>
    <property type="match status" value="1"/>
</dbReference>
<dbReference type="PANTHER" id="PTHR18919">
    <property type="entry name" value="ACETYL-COA C-ACYLTRANSFERASE"/>
    <property type="match status" value="1"/>
</dbReference>
<dbReference type="Pfam" id="PF02803">
    <property type="entry name" value="Thiolase_C"/>
    <property type="match status" value="1"/>
</dbReference>
<dbReference type="Pfam" id="PF00108">
    <property type="entry name" value="Thiolase_N"/>
    <property type="match status" value="1"/>
</dbReference>
<dbReference type="PIRSF" id="PIRSF000429">
    <property type="entry name" value="Ac-CoA_Ac_transf"/>
    <property type="match status" value="1"/>
</dbReference>
<dbReference type="SUPFAM" id="SSF53901">
    <property type="entry name" value="Thiolase-like"/>
    <property type="match status" value="2"/>
</dbReference>
<dbReference type="PROSITE" id="PS00098">
    <property type="entry name" value="THIOLASE_1"/>
    <property type="match status" value="1"/>
</dbReference>
<dbReference type="PROSITE" id="PS00737">
    <property type="entry name" value="THIOLASE_2"/>
    <property type="match status" value="1"/>
</dbReference>
<dbReference type="PROSITE" id="PS00099">
    <property type="entry name" value="THIOLASE_3"/>
    <property type="match status" value="1"/>
</dbReference>
<gene>
    <name type="primary">Acat1</name>
</gene>
<evidence type="ECO:0000250" key="1">
    <source>
        <dbReference type="UniProtKB" id="P17764"/>
    </source>
</evidence>
<evidence type="ECO:0000250" key="2">
    <source>
        <dbReference type="UniProtKB" id="P24752"/>
    </source>
</evidence>
<evidence type="ECO:0000255" key="3">
    <source>
        <dbReference type="PROSITE-ProRule" id="PRU10020"/>
    </source>
</evidence>
<evidence type="ECO:0000305" key="4"/>
<evidence type="ECO:0007744" key="5">
    <source>
    </source>
</evidence>
<evidence type="ECO:0007744" key="6">
    <source>
    </source>
</evidence>
<evidence type="ECO:0007744" key="7">
    <source>
    </source>
</evidence>
<comment type="function">
    <text evidence="2">This is one of the enzymes that catalyzes the last step of the mitochondrial beta-oxidation pathway, an aerobic process breaking down fatty acids into acetyl-CoA. Using free coenzyme A/CoA, catalyzes the thiolytic cleavage of medium- to long-chain 3-oxoacyl-CoAs into acetyl-CoA and a fatty acyl-CoA shortened by two carbon atoms. The activity of the enzyme is reversible and it can also catalyze the condensation of two acetyl-CoA molecules into acetoacetyl-CoA. Thereby, it plays a major role in ketone body metabolism.</text>
</comment>
<comment type="catalytic activity">
    <reaction evidence="3">
        <text>2 acetyl-CoA = acetoacetyl-CoA + CoA</text>
        <dbReference type="Rhea" id="RHEA:21036"/>
        <dbReference type="ChEBI" id="CHEBI:57286"/>
        <dbReference type="ChEBI" id="CHEBI:57287"/>
        <dbReference type="ChEBI" id="CHEBI:57288"/>
        <dbReference type="EC" id="2.3.1.9"/>
    </reaction>
    <physiologicalReaction direction="left-to-right" evidence="2">
        <dbReference type="Rhea" id="RHEA:21037"/>
    </physiologicalReaction>
    <physiologicalReaction direction="right-to-left" evidence="2">
        <dbReference type="Rhea" id="RHEA:21038"/>
    </physiologicalReaction>
</comment>
<comment type="catalytic activity">
    <reaction evidence="2">
        <text>propanoyl-CoA + acetyl-CoA = 2-methyl-3-oxobutanoyl-CoA + CoA</text>
        <dbReference type="Rhea" id="RHEA:30719"/>
        <dbReference type="ChEBI" id="CHEBI:57287"/>
        <dbReference type="ChEBI" id="CHEBI:57288"/>
        <dbReference type="ChEBI" id="CHEBI:57335"/>
        <dbReference type="ChEBI" id="CHEBI:57392"/>
    </reaction>
    <physiologicalReaction direction="left-to-right" evidence="2">
        <dbReference type="Rhea" id="RHEA:30720"/>
    </physiologicalReaction>
    <physiologicalReaction direction="right-to-left" evidence="2">
        <dbReference type="Rhea" id="RHEA:30721"/>
    </physiologicalReaction>
</comment>
<comment type="activity regulation">
    <text evidence="2">Activated by potassium ions, but not sodium ions.</text>
</comment>
<comment type="pathway">
    <text evidence="2">Lipid metabolism; fatty acid beta-oxidation.</text>
</comment>
<comment type="subunit">
    <text evidence="2">Homotetramer.</text>
</comment>
<comment type="subcellular location">
    <subcellularLocation>
        <location evidence="2">Mitochondrion</location>
    </subcellularLocation>
</comment>
<comment type="PTM">
    <text>Succinylation at Lys-265, adjacent to a coenzyme A binding site. Desuccinylated by SIRT5.</text>
</comment>
<comment type="similarity">
    <text evidence="4">Belongs to the thiolase-like superfamily. Thiolase family.</text>
</comment>
<name>THIL_MOUSE</name>
<reference key="1">
    <citation type="submission" date="2002-10" db="EMBL/GenBank/DDBJ databases">
        <title>Species-specific differences in peroxisomal association of acetoacetyl-CoA synthase.</title>
        <authorList>
            <person name="Ghys K."/>
            <person name="Amery L."/>
            <person name="Van Veldhoven P.P."/>
        </authorList>
    </citation>
    <scope>NUCLEOTIDE SEQUENCE [MRNA]</scope>
    <source>
        <strain>C3H/HeJ</strain>
    </source>
</reference>
<reference key="2">
    <citation type="journal article" date="2005" name="Science">
        <title>The transcriptional landscape of the mammalian genome.</title>
        <authorList>
            <person name="Carninci P."/>
            <person name="Kasukawa T."/>
            <person name="Katayama S."/>
            <person name="Gough J."/>
            <person name="Frith M.C."/>
            <person name="Maeda N."/>
            <person name="Oyama R."/>
            <person name="Ravasi T."/>
            <person name="Lenhard B."/>
            <person name="Wells C."/>
            <person name="Kodzius R."/>
            <person name="Shimokawa K."/>
            <person name="Bajic V.B."/>
            <person name="Brenner S.E."/>
            <person name="Batalov S."/>
            <person name="Forrest A.R."/>
            <person name="Zavolan M."/>
            <person name="Davis M.J."/>
            <person name="Wilming L.G."/>
            <person name="Aidinis V."/>
            <person name="Allen J.E."/>
            <person name="Ambesi-Impiombato A."/>
            <person name="Apweiler R."/>
            <person name="Aturaliya R.N."/>
            <person name="Bailey T.L."/>
            <person name="Bansal M."/>
            <person name="Baxter L."/>
            <person name="Beisel K.W."/>
            <person name="Bersano T."/>
            <person name="Bono H."/>
            <person name="Chalk A.M."/>
            <person name="Chiu K.P."/>
            <person name="Choudhary V."/>
            <person name="Christoffels A."/>
            <person name="Clutterbuck D.R."/>
            <person name="Crowe M.L."/>
            <person name="Dalla E."/>
            <person name="Dalrymple B.P."/>
            <person name="de Bono B."/>
            <person name="Della Gatta G."/>
            <person name="di Bernardo D."/>
            <person name="Down T."/>
            <person name="Engstrom P."/>
            <person name="Fagiolini M."/>
            <person name="Faulkner G."/>
            <person name="Fletcher C.F."/>
            <person name="Fukushima T."/>
            <person name="Furuno M."/>
            <person name="Futaki S."/>
            <person name="Gariboldi M."/>
            <person name="Georgii-Hemming P."/>
            <person name="Gingeras T.R."/>
            <person name="Gojobori T."/>
            <person name="Green R.E."/>
            <person name="Gustincich S."/>
            <person name="Harbers M."/>
            <person name="Hayashi Y."/>
            <person name="Hensch T.K."/>
            <person name="Hirokawa N."/>
            <person name="Hill D."/>
            <person name="Huminiecki L."/>
            <person name="Iacono M."/>
            <person name="Ikeo K."/>
            <person name="Iwama A."/>
            <person name="Ishikawa T."/>
            <person name="Jakt M."/>
            <person name="Kanapin A."/>
            <person name="Katoh M."/>
            <person name="Kawasawa Y."/>
            <person name="Kelso J."/>
            <person name="Kitamura H."/>
            <person name="Kitano H."/>
            <person name="Kollias G."/>
            <person name="Krishnan S.P."/>
            <person name="Kruger A."/>
            <person name="Kummerfeld S.K."/>
            <person name="Kurochkin I.V."/>
            <person name="Lareau L.F."/>
            <person name="Lazarevic D."/>
            <person name="Lipovich L."/>
            <person name="Liu J."/>
            <person name="Liuni S."/>
            <person name="McWilliam S."/>
            <person name="Madan Babu M."/>
            <person name="Madera M."/>
            <person name="Marchionni L."/>
            <person name="Matsuda H."/>
            <person name="Matsuzawa S."/>
            <person name="Miki H."/>
            <person name="Mignone F."/>
            <person name="Miyake S."/>
            <person name="Morris K."/>
            <person name="Mottagui-Tabar S."/>
            <person name="Mulder N."/>
            <person name="Nakano N."/>
            <person name="Nakauchi H."/>
            <person name="Ng P."/>
            <person name="Nilsson R."/>
            <person name="Nishiguchi S."/>
            <person name="Nishikawa S."/>
            <person name="Nori F."/>
            <person name="Ohara O."/>
            <person name="Okazaki Y."/>
            <person name="Orlando V."/>
            <person name="Pang K.C."/>
            <person name="Pavan W.J."/>
            <person name="Pavesi G."/>
            <person name="Pesole G."/>
            <person name="Petrovsky N."/>
            <person name="Piazza S."/>
            <person name="Reed J."/>
            <person name="Reid J.F."/>
            <person name="Ring B.Z."/>
            <person name="Ringwald M."/>
            <person name="Rost B."/>
            <person name="Ruan Y."/>
            <person name="Salzberg S.L."/>
            <person name="Sandelin A."/>
            <person name="Schneider C."/>
            <person name="Schoenbach C."/>
            <person name="Sekiguchi K."/>
            <person name="Semple C.A."/>
            <person name="Seno S."/>
            <person name="Sessa L."/>
            <person name="Sheng Y."/>
            <person name="Shibata Y."/>
            <person name="Shimada H."/>
            <person name="Shimada K."/>
            <person name="Silva D."/>
            <person name="Sinclair B."/>
            <person name="Sperling S."/>
            <person name="Stupka E."/>
            <person name="Sugiura K."/>
            <person name="Sultana R."/>
            <person name="Takenaka Y."/>
            <person name="Taki K."/>
            <person name="Tammoja K."/>
            <person name="Tan S.L."/>
            <person name="Tang S."/>
            <person name="Taylor M.S."/>
            <person name="Tegner J."/>
            <person name="Teichmann S.A."/>
            <person name="Ueda H.R."/>
            <person name="van Nimwegen E."/>
            <person name="Verardo R."/>
            <person name="Wei C.L."/>
            <person name="Yagi K."/>
            <person name="Yamanishi H."/>
            <person name="Zabarovsky E."/>
            <person name="Zhu S."/>
            <person name="Zimmer A."/>
            <person name="Hide W."/>
            <person name="Bult C."/>
            <person name="Grimmond S.M."/>
            <person name="Teasdale R.D."/>
            <person name="Liu E.T."/>
            <person name="Brusic V."/>
            <person name="Quackenbush J."/>
            <person name="Wahlestedt C."/>
            <person name="Mattick J.S."/>
            <person name="Hume D.A."/>
            <person name="Kai C."/>
            <person name="Sasaki D."/>
            <person name="Tomaru Y."/>
            <person name="Fukuda S."/>
            <person name="Kanamori-Katayama M."/>
            <person name="Suzuki M."/>
            <person name="Aoki J."/>
            <person name="Arakawa T."/>
            <person name="Iida J."/>
            <person name="Imamura K."/>
            <person name="Itoh M."/>
            <person name="Kato T."/>
            <person name="Kawaji H."/>
            <person name="Kawagashira N."/>
            <person name="Kawashima T."/>
            <person name="Kojima M."/>
            <person name="Kondo S."/>
            <person name="Konno H."/>
            <person name="Nakano K."/>
            <person name="Ninomiya N."/>
            <person name="Nishio T."/>
            <person name="Okada M."/>
            <person name="Plessy C."/>
            <person name="Shibata K."/>
            <person name="Shiraki T."/>
            <person name="Suzuki S."/>
            <person name="Tagami M."/>
            <person name="Waki K."/>
            <person name="Watahiki A."/>
            <person name="Okamura-Oho Y."/>
            <person name="Suzuki H."/>
            <person name="Kawai J."/>
            <person name="Hayashizaki Y."/>
        </authorList>
    </citation>
    <scope>NUCLEOTIDE SEQUENCE [LARGE SCALE MRNA]</scope>
    <source>
        <strain>C57BL/6J</strain>
        <strain>NOD</strain>
        <tissue>Head</tissue>
        <tissue>Medulla oblongata</tissue>
        <tissue>Thymus</tissue>
    </source>
</reference>
<reference key="3">
    <citation type="journal article" date="2004" name="Genome Res.">
        <title>The status, quality, and expansion of the NIH full-length cDNA project: the Mammalian Gene Collection (MGC).</title>
        <authorList>
            <consortium name="The MGC Project Team"/>
        </authorList>
    </citation>
    <scope>NUCLEOTIDE SEQUENCE [LARGE SCALE MRNA]</scope>
    <source>
        <tissue>Eye</tissue>
    </source>
</reference>
<reference key="4">
    <citation type="submission" date="2009-01" db="UniProtKB">
        <authorList>
            <person name="Lubec G."/>
            <person name="Kang S.U."/>
            <person name="Sunyer B."/>
            <person name="Chen W.-Q."/>
        </authorList>
    </citation>
    <scope>PROTEIN SEQUENCE OF 47-75; 85-121; 163-171; 179-187; 206-218; 228-254; 271-332 AND 363-390</scope>
    <scope>IDENTIFICATION BY MASS SPECTROMETRY</scope>
    <source>
        <strain>C57BL/6J</strain>
        <strain>OF1</strain>
        <tissue>Brain</tissue>
        <tissue>Hippocampus</tissue>
    </source>
</reference>
<reference key="5">
    <citation type="journal article" date="2010" name="Cell">
        <title>A tissue-specific atlas of mouse protein phosphorylation and expression.</title>
        <authorList>
            <person name="Huttlin E.L."/>
            <person name="Jedrychowski M.P."/>
            <person name="Elias J.E."/>
            <person name="Goswami T."/>
            <person name="Rad R."/>
            <person name="Beausoleil S.A."/>
            <person name="Villen J."/>
            <person name="Haas W."/>
            <person name="Sowa M.E."/>
            <person name="Gygi S.P."/>
        </authorList>
    </citation>
    <scope>PHOSPHORYLATION [LARGE SCALE ANALYSIS] AT SER-204</scope>
    <scope>IDENTIFICATION BY MASS SPECTROMETRY [LARGE SCALE ANALYSIS]</scope>
    <source>
        <tissue>Brain</tissue>
        <tissue>Brown adipose tissue</tissue>
        <tissue>Heart</tissue>
        <tissue>Kidney</tissue>
        <tissue>Liver</tissue>
        <tissue>Lung</tissue>
        <tissue>Pancreas</tissue>
        <tissue>Spleen</tissue>
        <tissue>Testis</tissue>
    </source>
</reference>
<reference key="6">
    <citation type="journal article" date="2013" name="Mol. Cell">
        <title>SIRT5-mediated lysine desuccinylation impacts diverse metabolic pathways.</title>
        <authorList>
            <person name="Park J."/>
            <person name="Chen Y."/>
            <person name="Tishkoff D.X."/>
            <person name="Peng C."/>
            <person name="Tan M."/>
            <person name="Dai L."/>
            <person name="Xie Z."/>
            <person name="Zhang Y."/>
            <person name="Zwaans B.M."/>
            <person name="Skinner M.E."/>
            <person name="Lombard D.B."/>
            <person name="Zhao Y."/>
        </authorList>
    </citation>
    <scope>SUCCINYLATION AT LYS-265</scope>
    <scope>DESUCCINYLATION BY SIRT5</scope>
    <scope>ACETYLATION [LARGE SCALE ANALYSIS] AT LYS-171</scope>
    <scope>SUCCINYLATION [LARGE SCALE ANALYSIS] AT LYS-63; LYS-75; LYS-171; LYS-178; LYS-187; LYS-199; LYS-220; LYS-227; LYS-240; LYS-242; LYS-260; LYS-263 AND LYS-265</scope>
    <scope>IDENTIFICATION BY MASS SPECTROMETRY [LARGE SCALE ANALYSIS]</scope>
    <source>
        <tissue>Embryonic fibroblast</tissue>
        <tissue>Liver</tissue>
    </source>
</reference>
<reference key="7">
    <citation type="journal article" date="2013" name="Proc. Natl. Acad. Sci. U.S.A.">
        <title>Label-free quantitative proteomics of the lysine acetylome in mitochondria identifies substrates of SIRT3 in metabolic pathways.</title>
        <authorList>
            <person name="Rardin M.J."/>
            <person name="Newman J.C."/>
            <person name="Held J.M."/>
            <person name="Cusack M.P."/>
            <person name="Sorensen D.J."/>
            <person name="Li B."/>
            <person name="Schilling B."/>
            <person name="Mooney S.D."/>
            <person name="Kahn C.R."/>
            <person name="Verdin E."/>
            <person name="Gibson B.W."/>
        </authorList>
    </citation>
    <scope>ACETYLATION [LARGE SCALE ANALYSIS] AT LYS-63; LYS-171; LYS-178; LYS-187; LYS-199; LYS-220; LYS-227; LYS-242; LYS-248; LYS-254; LYS-260; LYS-270 AND LYS-335</scope>
    <scope>IDENTIFICATION BY MASS SPECTROMETRY [LARGE SCALE ANALYSIS]</scope>
    <source>
        <tissue>Liver</tissue>
    </source>
</reference>
<accession>Q8QZT1</accession>
<accession>Q3TE92</accession>
<sequence>MAALVALHGVVRRPLLRGLLQEVRCLERSYASKPTLNEVVIVSAIRTPIGSFLGSLASQPATKLGTAAIQGAIEKAGIPKEEVKEVYMGNVIQGGEGQAPTRQATLGAGLPISTPCTTVNKVCASGMKAIMMASQSLMCGHQDVMVAGGMESMSNVPYVMSRGATPYGGVKLEDLIVKDGLTDVYNKIHMGNCAENTAKKMNISRQEQDTYALSSYTRSKEAWDAGKFASEITPITISVKGKPDVVVKEDEEYKRVDFSKVPKLKTVFQKENGTITAANASTLNDGAAALVLMTAEAAQRLNVKPLARIAAFADAAVDPIDFPLAPAYAVPKVLKYAGLKKEDIAMWEVNEAFSVVVLANIKMLEIDPQKVNIHGGAVSLGHPIGMSGARIVVHMAHALKPGEFGLASICNGGGGASALLIEKL</sequence>
<feature type="transit peptide" description="Mitochondrion" evidence="1">
    <location>
        <begin position="1"/>
        <end position="30"/>
    </location>
</feature>
<feature type="chain" id="PRO_0000034087" description="Acetyl-CoA acetyltransferase, mitochondrial">
    <location>
        <begin position="31"/>
        <end position="424"/>
    </location>
</feature>
<feature type="active site" description="Acyl-thioester intermediate" evidence="2">
    <location>
        <position position="123"/>
    </location>
</feature>
<feature type="active site" description="Proton donor/acceptor" evidence="2">
    <location>
        <position position="410"/>
    </location>
</feature>
<feature type="binding site" evidence="2">
    <location>
        <position position="216"/>
    </location>
    <ligand>
        <name>CoA</name>
        <dbReference type="ChEBI" id="CHEBI:57287"/>
    </ligand>
</feature>
<feature type="binding site" evidence="2">
    <location>
        <position position="216"/>
    </location>
    <ligand>
        <name>K(+)</name>
        <dbReference type="ChEBI" id="CHEBI:29103"/>
    </ligand>
</feature>
<feature type="binding site" evidence="2">
    <location>
        <begin position="255"/>
        <end position="257"/>
    </location>
    <ligand>
        <name>CoA</name>
        <dbReference type="ChEBI" id="CHEBI:57287"/>
    </ligand>
</feature>
<feature type="binding site" evidence="2">
    <location>
        <position position="260"/>
    </location>
    <ligand>
        <name>CoA</name>
        <dbReference type="ChEBI" id="CHEBI:57287"/>
    </ligand>
</feature>
<feature type="binding site" evidence="2">
    <location>
        <position position="277"/>
    </location>
    <ligand>
        <name>K(+)</name>
        <dbReference type="ChEBI" id="CHEBI:29103"/>
    </ligand>
</feature>
<feature type="binding site" evidence="2">
    <location>
        <position position="278"/>
    </location>
    <ligand>
        <name>K(+)</name>
        <dbReference type="ChEBI" id="CHEBI:29103"/>
    </ligand>
</feature>
<feature type="binding site" evidence="2">
    <location>
        <position position="280"/>
    </location>
    <ligand>
        <name>K(+)</name>
        <dbReference type="ChEBI" id="CHEBI:29103"/>
    </ligand>
</feature>
<feature type="binding site" evidence="2">
    <location>
        <position position="281"/>
    </location>
    <ligand>
        <name>CoA</name>
        <dbReference type="ChEBI" id="CHEBI:57287"/>
    </ligand>
</feature>
<feature type="binding site" evidence="2">
    <location>
        <position position="378"/>
    </location>
    <ligand>
        <name>K(+)</name>
        <dbReference type="ChEBI" id="CHEBI:29103"/>
    </ligand>
</feature>
<feature type="site" description="Increases nucleophilicity of active site Cys" evidence="2">
    <location>
        <position position="382"/>
    </location>
</feature>
<feature type="modified residue" description="N6-acetyllysine; alternate" evidence="6">
    <location>
        <position position="63"/>
    </location>
</feature>
<feature type="modified residue" description="N6-succinyllysine; alternate" evidence="7">
    <location>
        <position position="63"/>
    </location>
</feature>
<feature type="modified residue" description="N6-succinyllysine" evidence="7">
    <location>
        <position position="75"/>
    </location>
</feature>
<feature type="modified residue" description="N6-acetyllysine; alternate" evidence="6 7">
    <location>
        <position position="171"/>
    </location>
</feature>
<feature type="modified residue" description="N6-succinyllysine; alternate" evidence="7">
    <location>
        <position position="171"/>
    </location>
</feature>
<feature type="modified residue" description="N6-acetyllysine; alternate" evidence="6">
    <location>
        <position position="178"/>
    </location>
</feature>
<feature type="modified residue" description="N6-succinyllysine; alternate" evidence="7">
    <location>
        <position position="178"/>
    </location>
</feature>
<feature type="modified residue" description="N6-acetyllysine; alternate" evidence="6">
    <location>
        <position position="187"/>
    </location>
</feature>
<feature type="modified residue" description="N6-succinyllysine; alternate" evidence="7">
    <location>
        <position position="187"/>
    </location>
</feature>
<feature type="modified residue" description="N6-acetyllysine; alternate" evidence="6">
    <location>
        <position position="199"/>
    </location>
</feature>
<feature type="modified residue" description="N6-succinyllysine; alternate" evidence="7">
    <location>
        <position position="199"/>
    </location>
</feature>
<feature type="modified residue" description="Phosphoserine" evidence="5">
    <location>
        <position position="204"/>
    </location>
</feature>
<feature type="modified residue" description="N6-acetyllysine; alternate" evidence="6">
    <location>
        <position position="220"/>
    </location>
</feature>
<feature type="modified residue" description="N6-succinyllysine; alternate" evidence="7">
    <location>
        <position position="220"/>
    </location>
</feature>
<feature type="modified residue" description="N6-acetyllysine; alternate" evidence="6">
    <location>
        <position position="227"/>
    </location>
</feature>
<feature type="modified residue" description="N6-succinyllysine; alternate" evidence="7">
    <location>
        <position position="227"/>
    </location>
</feature>
<feature type="modified residue" description="N6-succinyllysine" evidence="7">
    <location>
        <position position="240"/>
    </location>
</feature>
<feature type="modified residue" description="N6-acetyllysine; alternate" evidence="6">
    <location>
        <position position="242"/>
    </location>
</feature>
<feature type="modified residue" description="N6-succinyllysine; alternate" evidence="7">
    <location>
        <position position="242"/>
    </location>
</feature>
<feature type="modified residue" description="N6-acetyllysine" evidence="6">
    <location>
        <position position="248"/>
    </location>
</feature>
<feature type="modified residue" description="N6-acetyllysine" evidence="6">
    <location>
        <position position="254"/>
    </location>
</feature>
<feature type="modified residue" description="N6-acetyllysine; alternate" evidence="6">
    <location>
        <position position="260"/>
    </location>
</feature>
<feature type="modified residue" description="N6-succinyllysine; alternate" evidence="7">
    <location>
        <position position="260"/>
    </location>
</feature>
<feature type="modified residue" description="N6-succinyllysine" evidence="7">
    <location>
        <position position="263"/>
    </location>
</feature>
<feature type="modified residue" description="N6-succinyllysine" evidence="7">
    <location>
        <position position="265"/>
    </location>
</feature>
<feature type="modified residue" description="N6-acetyllysine" evidence="6">
    <location>
        <position position="270"/>
    </location>
</feature>
<feature type="modified residue" description="N6-acetyllysine" evidence="6">
    <location>
        <position position="335"/>
    </location>
</feature>
<keyword id="KW-0007">Acetylation</keyword>
<keyword id="KW-0012">Acyltransferase</keyword>
<keyword id="KW-0903">Direct protein sequencing</keyword>
<keyword id="KW-0276">Fatty acid metabolism</keyword>
<keyword id="KW-0443">Lipid metabolism</keyword>
<keyword id="KW-0479">Metal-binding</keyword>
<keyword id="KW-0496">Mitochondrion</keyword>
<keyword id="KW-0597">Phosphoprotein</keyword>
<keyword id="KW-0630">Potassium</keyword>
<keyword id="KW-1185">Reference proteome</keyword>
<keyword id="KW-0808">Transferase</keyword>
<keyword id="KW-0809">Transit peptide</keyword>